<name>RS20_MYXXD</name>
<feature type="chain" id="PRO_0000260128" description="Small ribosomal subunit protein bS20">
    <location>
        <begin position="1"/>
        <end position="91"/>
    </location>
</feature>
<feature type="region of interest" description="Disordered" evidence="2">
    <location>
        <begin position="1"/>
        <end position="25"/>
    </location>
</feature>
<feature type="compositionally biased region" description="Basic residues" evidence="2">
    <location>
        <begin position="8"/>
        <end position="20"/>
    </location>
</feature>
<gene>
    <name evidence="1" type="primary">rpsT</name>
    <name type="ordered locus">MXAN_4742</name>
</gene>
<dbReference type="EMBL" id="CP000113">
    <property type="protein sequence ID" value="ABF86211.1"/>
    <property type="molecule type" value="Genomic_DNA"/>
</dbReference>
<dbReference type="RefSeq" id="WP_011554729.1">
    <property type="nucleotide sequence ID" value="NC_008095.1"/>
</dbReference>
<dbReference type="SMR" id="Q1D369"/>
<dbReference type="STRING" id="246197.MXAN_4742"/>
<dbReference type="EnsemblBacteria" id="ABF86211">
    <property type="protein sequence ID" value="ABF86211"/>
    <property type="gene ID" value="MXAN_4742"/>
</dbReference>
<dbReference type="GeneID" id="41362041"/>
<dbReference type="KEGG" id="mxa:MXAN_4742"/>
<dbReference type="eggNOG" id="COG0268">
    <property type="taxonomic scope" value="Bacteria"/>
</dbReference>
<dbReference type="HOGENOM" id="CLU_160655_3_1_7"/>
<dbReference type="OrthoDB" id="9807974at2"/>
<dbReference type="Proteomes" id="UP000002402">
    <property type="component" value="Chromosome"/>
</dbReference>
<dbReference type="GO" id="GO:0005829">
    <property type="term" value="C:cytosol"/>
    <property type="evidence" value="ECO:0007669"/>
    <property type="project" value="TreeGrafter"/>
</dbReference>
<dbReference type="GO" id="GO:0015935">
    <property type="term" value="C:small ribosomal subunit"/>
    <property type="evidence" value="ECO:0007669"/>
    <property type="project" value="TreeGrafter"/>
</dbReference>
<dbReference type="GO" id="GO:0070181">
    <property type="term" value="F:small ribosomal subunit rRNA binding"/>
    <property type="evidence" value="ECO:0007669"/>
    <property type="project" value="TreeGrafter"/>
</dbReference>
<dbReference type="GO" id="GO:0003735">
    <property type="term" value="F:structural constituent of ribosome"/>
    <property type="evidence" value="ECO:0007669"/>
    <property type="project" value="InterPro"/>
</dbReference>
<dbReference type="GO" id="GO:0006412">
    <property type="term" value="P:translation"/>
    <property type="evidence" value="ECO:0007669"/>
    <property type="project" value="UniProtKB-UniRule"/>
</dbReference>
<dbReference type="Gene3D" id="1.20.58.110">
    <property type="entry name" value="Ribosomal protein S20"/>
    <property type="match status" value="1"/>
</dbReference>
<dbReference type="HAMAP" id="MF_00500">
    <property type="entry name" value="Ribosomal_bS20"/>
    <property type="match status" value="1"/>
</dbReference>
<dbReference type="InterPro" id="IPR002583">
    <property type="entry name" value="Ribosomal_bS20"/>
</dbReference>
<dbReference type="InterPro" id="IPR036510">
    <property type="entry name" value="Ribosomal_bS20_sf"/>
</dbReference>
<dbReference type="NCBIfam" id="TIGR00029">
    <property type="entry name" value="S20"/>
    <property type="match status" value="1"/>
</dbReference>
<dbReference type="PANTHER" id="PTHR33398">
    <property type="entry name" value="30S RIBOSOMAL PROTEIN S20"/>
    <property type="match status" value="1"/>
</dbReference>
<dbReference type="PANTHER" id="PTHR33398:SF1">
    <property type="entry name" value="SMALL RIBOSOMAL SUBUNIT PROTEIN BS20C"/>
    <property type="match status" value="1"/>
</dbReference>
<dbReference type="Pfam" id="PF01649">
    <property type="entry name" value="Ribosomal_S20p"/>
    <property type="match status" value="1"/>
</dbReference>
<dbReference type="SUPFAM" id="SSF46992">
    <property type="entry name" value="Ribosomal protein S20"/>
    <property type="match status" value="1"/>
</dbReference>
<reference key="1">
    <citation type="journal article" date="2006" name="Proc. Natl. Acad. Sci. U.S.A.">
        <title>Evolution of sensory complexity recorded in a myxobacterial genome.</title>
        <authorList>
            <person name="Goldman B.S."/>
            <person name="Nierman W.C."/>
            <person name="Kaiser D."/>
            <person name="Slater S.C."/>
            <person name="Durkin A.S."/>
            <person name="Eisen J.A."/>
            <person name="Ronning C.M."/>
            <person name="Barbazuk W.B."/>
            <person name="Blanchard M."/>
            <person name="Field C."/>
            <person name="Halling C."/>
            <person name="Hinkle G."/>
            <person name="Iartchuk O."/>
            <person name="Kim H.S."/>
            <person name="Mackenzie C."/>
            <person name="Madupu R."/>
            <person name="Miller N."/>
            <person name="Shvartsbeyn A."/>
            <person name="Sullivan S.A."/>
            <person name="Vaudin M."/>
            <person name="Wiegand R."/>
            <person name="Kaplan H.B."/>
        </authorList>
    </citation>
    <scope>NUCLEOTIDE SEQUENCE [LARGE SCALE GENOMIC DNA]</scope>
    <source>
        <strain>DK1622</strain>
    </source>
</reference>
<evidence type="ECO:0000255" key="1">
    <source>
        <dbReference type="HAMAP-Rule" id="MF_00500"/>
    </source>
</evidence>
<evidence type="ECO:0000256" key="2">
    <source>
        <dbReference type="SAM" id="MobiDB-lite"/>
    </source>
</evidence>
<evidence type="ECO:0000305" key="3"/>
<proteinExistence type="inferred from homology"/>
<keyword id="KW-1185">Reference proteome</keyword>
<keyword id="KW-0687">Ribonucleoprotein</keyword>
<keyword id="KW-0689">Ribosomal protein</keyword>
<keyword id="KW-0694">RNA-binding</keyword>
<keyword id="KW-0699">rRNA-binding</keyword>
<organism>
    <name type="scientific">Myxococcus xanthus (strain DK1622)</name>
    <dbReference type="NCBI Taxonomy" id="246197"/>
    <lineage>
        <taxon>Bacteria</taxon>
        <taxon>Pseudomonadati</taxon>
        <taxon>Myxococcota</taxon>
        <taxon>Myxococcia</taxon>
        <taxon>Myxococcales</taxon>
        <taxon>Cystobacterineae</taxon>
        <taxon>Myxococcaceae</taxon>
        <taxon>Myxococcus</taxon>
    </lineage>
</organism>
<comment type="function">
    <text evidence="1">Binds directly to 16S ribosomal RNA.</text>
</comment>
<comment type="similarity">
    <text evidence="1">Belongs to the bacterial ribosomal protein bS20 family.</text>
</comment>
<accession>Q1D369</accession>
<sequence length="91" mass="9738">MANTKSAEKRHRQSLKRRARNVTVRGEVKTAVKSAREALGSKDGAKMTDAIKSAAKALSKAATKGVLHKRTASRRISRLAKAATKAARAQA</sequence>
<protein>
    <recommendedName>
        <fullName evidence="1">Small ribosomal subunit protein bS20</fullName>
    </recommendedName>
    <alternativeName>
        <fullName evidence="3">30S ribosomal protein S20</fullName>
    </alternativeName>
</protein>